<organism>
    <name type="scientific">Nostoc sp. (strain PCC 7120 / SAG 25.82 / UTEX 2576)</name>
    <dbReference type="NCBI Taxonomy" id="103690"/>
    <lineage>
        <taxon>Bacteria</taxon>
        <taxon>Bacillati</taxon>
        <taxon>Cyanobacteriota</taxon>
        <taxon>Cyanophyceae</taxon>
        <taxon>Nostocales</taxon>
        <taxon>Nostocaceae</taxon>
        <taxon>Nostoc</taxon>
    </lineage>
</organism>
<name>RL4_NOSS1</name>
<evidence type="ECO:0000255" key="1">
    <source>
        <dbReference type="HAMAP-Rule" id="MF_01328"/>
    </source>
</evidence>
<evidence type="ECO:0000256" key="2">
    <source>
        <dbReference type="SAM" id="MobiDB-lite"/>
    </source>
</evidence>
<evidence type="ECO:0000305" key="3"/>
<protein>
    <recommendedName>
        <fullName evidence="1">Large ribosomal subunit protein uL4</fullName>
    </recommendedName>
    <alternativeName>
        <fullName evidence="3">50S ribosomal protein L4</fullName>
    </alternativeName>
</protein>
<comment type="function">
    <text evidence="1">One of the primary rRNA binding proteins, this protein initially binds near the 5'-end of the 23S rRNA. It is important during the early stages of 50S assembly. It makes multiple contacts with different domains of the 23S rRNA in the assembled 50S subunit and ribosome.</text>
</comment>
<comment type="function">
    <text evidence="1">Forms part of the polypeptide exit tunnel.</text>
</comment>
<comment type="subunit">
    <text evidence="1">Part of the 50S ribosomal subunit.</text>
</comment>
<comment type="similarity">
    <text evidence="1">Belongs to the universal ribosomal protein uL4 family.</text>
</comment>
<proteinExistence type="inferred from homology"/>
<keyword id="KW-1185">Reference proteome</keyword>
<keyword id="KW-0687">Ribonucleoprotein</keyword>
<keyword id="KW-0689">Ribosomal protein</keyword>
<keyword id="KW-0694">RNA-binding</keyword>
<keyword id="KW-0699">rRNA-binding</keyword>
<reference key="1">
    <citation type="journal article" date="2001" name="DNA Res.">
        <title>Complete genomic sequence of the filamentous nitrogen-fixing cyanobacterium Anabaena sp. strain PCC 7120.</title>
        <authorList>
            <person name="Kaneko T."/>
            <person name="Nakamura Y."/>
            <person name="Wolk C.P."/>
            <person name="Kuritz T."/>
            <person name="Sasamoto S."/>
            <person name="Watanabe A."/>
            <person name="Iriguchi M."/>
            <person name="Ishikawa A."/>
            <person name="Kawashima K."/>
            <person name="Kimura T."/>
            <person name="Kishida Y."/>
            <person name="Kohara M."/>
            <person name="Matsumoto M."/>
            <person name="Matsuno A."/>
            <person name="Muraki A."/>
            <person name="Nakazaki N."/>
            <person name="Shimpo S."/>
            <person name="Sugimoto M."/>
            <person name="Takazawa M."/>
            <person name="Yamada M."/>
            <person name="Yasuda M."/>
            <person name="Tabata S."/>
        </authorList>
    </citation>
    <scope>NUCLEOTIDE SEQUENCE [LARGE SCALE GENOMIC DNA]</scope>
    <source>
        <strain>PCC 7120 / SAG 25.82 / UTEX 2576</strain>
    </source>
</reference>
<dbReference type="EMBL" id="BA000019">
    <property type="protein sequence ID" value="BAB75913.1"/>
    <property type="molecule type" value="Genomic_DNA"/>
</dbReference>
<dbReference type="PIR" id="AG2332">
    <property type="entry name" value="AG2332"/>
</dbReference>
<dbReference type="RefSeq" id="WP_010998352.1">
    <property type="nucleotide sequence ID" value="NZ_RSCN01000010.1"/>
</dbReference>
<dbReference type="SMR" id="Q8YPI0"/>
<dbReference type="STRING" id="103690.gene:10496263"/>
<dbReference type="KEGG" id="ana:all4214"/>
<dbReference type="eggNOG" id="COG0088">
    <property type="taxonomic scope" value="Bacteria"/>
</dbReference>
<dbReference type="OrthoDB" id="9803201at2"/>
<dbReference type="Proteomes" id="UP000002483">
    <property type="component" value="Chromosome"/>
</dbReference>
<dbReference type="GO" id="GO:1990904">
    <property type="term" value="C:ribonucleoprotein complex"/>
    <property type="evidence" value="ECO:0007669"/>
    <property type="project" value="UniProtKB-KW"/>
</dbReference>
<dbReference type="GO" id="GO:0005840">
    <property type="term" value="C:ribosome"/>
    <property type="evidence" value="ECO:0007669"/>
    <property type="project" value="UniProtKB-KW"/>
</dbReference>
<dbReference type="GO" id="GO:0019843">
    <property type="term" value="F:rRNA binding"/>
    <property type="evidence" value="ECO:0007669"/>
    <property type="project" value="UniProtKB-UniRule"/>
</dbReference>
<dbReference type="GO" id="GO:0003735">
    <property type="term" value="F:structural constituent of ribosome"/>
    <property type="evidence" value="ECO:0007669"/>
    <property type="project" value="InterPro"/>
</dbReference>
<dbReference type="GO" id="GO:0006412">
    <property type="term" value="P:translation"/>
    <property type="evidence" value="ECO:0007669"/>
    <property type="project" value="UniProtKB-UniRule"/>
</dbReference>
<dbReference type="Gene3D" id="3.40.1370.10">
    <property type="match status" value="1"/>
</dbReference>
<dbReference type="HAMAP" id="MF_01328_B">
    <property type="entry name" value="Ribosomal_uL4_B"/>
    <property type="match status" value="1"/>
</dbReference>
<dbReference type="InterPro" id="IPR002136">
    <property type="entry name" value="Ribosomal_uL4"/>
</dbReference>
<dbReference type="InterPro" id="IPR013005">
    <property type="entry name" value="Ribosomal_uL4-like"/>
</dbReference>
<dbReference type="InterPro" id="IPR023574">
    <property type="entry name" value="Ribosomal_uL4_dom_sf"/>
</dbReference>
<dbReference type="NCBIfam" id="TIGR03953">
    <property type="entry name" value="rplD_bact"/>
    <property type="match status" value="1"/>
</dbReference>
<dbReference type="PANTHER" id="PTHR10746">
    <property type="entry name" value="50S RIBOSOMAL PROTEIN L4"/>
    <property type="match status" value="1"/>
</dbReference>
<dbReference type="PANTHER" id="PTHR10746:SF17">
    <property type="entry name" value="LARGE RIBOSOMAL SUBUNIT PROTEIN UL4C"/>
    <property type="match status" value="1"/>
</dbReference>
<dbReference type="Pfam" id="PF00573">
    <property type="entry name" value="Ribosomal_L4"/>
    <property type="match status" value="1"/>
</dbReference>
<dbReference type="SUPFAM" id="SSF52166">
    <property type="entry name" value="Ribosomal protein L4"/>
    <property type="match status" value="1"/>
</dbReference>
<accession>Q8YPI0</accession>
<feature type="chain" id="PRO_0000129176" description="Large ribosomal subunit protein uL4">
    <location>
        <begin position="1"/>
        <end position="210"/>
    </location>
</feature>
<feature type="region of interest" description="Disordered" evidence="2">
    <location>
        <begin position="41"/>
        <end position="71"/>
    </location>
</feature>
<feature type="compositionally biased region" description="Polar residues" evidence="2">
    <location>
        <begin position="41"/>
        <end position="52"/>
    </location>
</feature>
<feature type="compositionally biased region" description="Basic residues" evidence="2">
    <location>
        <begin position="60"/>
        <end position="71"/>
    </location>
</feature>
<sequence length="210" mass="23691">MVESVVKNWQGEQIGQKTFELRVAKETTAAHIVHRALVRQQTNARQGTASTKTRAEVRGGGRKPWRQKGTGRARAGSIRSPLWRGGGVIFGPKPRDFDLKMNRKERRLALRTAFVSRIDDLILVEEFSNELSRPKTKDLVAAFTRWGAEPESKILLILSEFPENVYLSARNIENLKLIAADQLNVYDLLHADKIVVTTSALEKIQEVYNG</sequence>
<gene>
    <name evidence="1" type="primary">rplD</name>
    <name evidence="1" type="synonym">rpl4</name>
    <name type="ordered locus">all4214</name>
</gene>